<evidence type="ECO:0000255" key="1">
    <source>
        <dbReference type="HAMAP-Rule" id="MF_01093"/>
    </source>
</evidence>
<evidence type="ECO:0000269" key="2">
    <source>
    </source>
</evidence>
<evidence type="ECO:0000269" key="3">
    <source>
    </source>
</evidence>
<evidence type="ECO:0000269" key="4">
    <source>
    </source>
</evidence>
<evidence type="ECO:0000269" key="5">
    <source>
    </source>
</evidence>
<evidence type="ECO:0000303" key="6">
    <source>
    </source>
</evidence>
<evidence type="ECO:0000305" key="7"/>
<evidence type="ECO:0000305" key="8">
    <source>
    </source>
</evidence>
<proteinExistence type="evidence at protein level"/>
<accession>P80184</accession>
<accession>D9PY24</accession>
<dbReference type="EC" id="7.2.1.4" evidence="1 4"/>
<dbReference type="EMBL" id="X73123">
    <property type="status" value="NOT_ANNOTATED_CDS"/>
    <property type="molecule type" value="Genomic_DNA"/>
</dbReference>
<dbReference type="EMBL" id="CP001710">
    <property type="protein sequence ID" value="ADL59122.1"/>
    <property type="molecule type" value="Genomic_DNA"/>
</dbReference>
<dbReference type="RefSeq" id="WP_013296332.1">
    <property type="nucleotide sequence ID" value="NC_014408.1"/>
</dbReference>
<dbReference type="PDB" id="8Q3V">
    <property type="method" value="EM"/>
    <property type="resolution" value="2.08 A"/>
    <property type="chains" value="A/Q/a=1-238"/>
</dbReference>
<dbReference type="PDB" id="8Q54">
    <property type="method" value="EM"/>
    <property type="resolution" value="2.39 A"/>
    <property type="chains" value="A/Q/a=1-238"/>
</dbReference>
<dbReference type="PDBsum" id="8Q3V"/>
<dbReference type="PDBsum" id="8Q54"/>
<dbReference type="EMDB" id="EMD-18135"/>
<dbReference type="EMDB" id="EMD-18162"/>
<dbReference type="SMR" id="P80184"/>
<dbReference type="STRING" id="79929.MTBMA_c15430"/>
<dbReference type="TCDB" id="3.C.1.1.1">
    <property type="family name" value="the na(+) transporting methyltetrahydromethanopterin:coenzyme m methyltransferase (nat-mmm) family"/>
</dbReference>
<dbReference type="PaxDb" id="79929-MTBMA_c15430"/>
<dbReference type="GeneID" id="92394150"/>
<dbReference type="GeneID" id="9705252"/>
<dbReference type="KEGG" id="mmg:MTBMA_c15430"/>
<dbReference type="PATRIC" id="fig|79929.8.peg.1496"/>
<dbReference type="HOGENOM" id="CLU_100863_0_0_2"/>
<dbReference type="OrthoDB" id="130682at2157"/>
<dbReference type="UniPathway" id="UPA00640">
    <property type="reaction ID" value="UER00698"/>
</dbReference>
<dbReference type="Proteomes" id="UP000000345">
    <property type="component" value="Chromosome"/>
</dbReference>
<dbReference type="GO" id="GO:0034708">
    <property type="term" value="C:methyltransferase complex"/>
    <property type="evidence" value="ECO:0000314"/>
    <property type="project" value="UniProtKB"/>
</dbReference>
<dbReference type="GO" id="GO:0005886">
    <property type="term" value="C:plasma membrane"/>
    <property type="evidence" value="ECO:0007669"/>
    <property type="project" value="UniProtKB-SubCell"/>
</dbReference>
<dbReference type="GO" id="GO:0050897">
    <property type="term" value="F:cobalt ion binding"/>
    <property type="evidence" value="ECO:0007669"/>
    <property type="project" value="InterPro"/>
</dbReference>
<dbReference type="GO" id="GO:0030269">
    <property type="term" value="F:tetrahydromethanopterin S-methyltransferase activity"/>
    <property type="evidence" value="ECO:0007669"/>
    <property type="project" value="UniProtKB-UniRule"/>
</dbReference>
<dbReference type="GO" id="GO:0019386">
    <property type="term" value="P:methanogenesis, from carbon dioxide"/>
    <property type="evidence" value="ECO:0007669"/>
    <property type="project" value="UniProtKB-UniRule"/>
</dbReference>
<dbReference type="GO" id="GO:0032259">
    <property type="term" value="P:methylation"/>
    <property type="evidence" value="ECO:0007669"/>
    <property type="project" value="UniProtKB-KW"/>
</dbReference>
<dbReference type="GO" id="GO:0006730">
    <property type="term" value="P:one-carbon metabolic process"/>
    <property type="evidence" value="ECO:0007669"/>
    <property type="project" value="UniProtKB-UniRule"/>
</dbReference>
<dbReference type="HAMAP" id="MF_01093">
    <property type="entry name" value="MtrA"/>
    <property type="match status" value="1"/>
</dbReference>
<dbReference type="InterPro" id="IPR030688">
    <property type="entry name" value="MeTrfase_MtrA/MtxA"/>
</dbReference>
<dbReference type="InterPro" id="IPR005778">
    <property type="entry name" value="MtrA"/>
</dbReference>
<dbReference type="NCBIfam" id="TIGR01111">
    <property type="entry name" value="mtrA"/>
    <property type="match status" value="1"/>
</dbReference>
<dbReference type="NCBIfam" id="NF002126">
    <property type="entry name" value="PRK00964.1-4"/>
    <property type="match status" value="1"/>
</dbReference>
<dbReference type="Pfam" id="PF04208">
    <property type="entry name" value="MtrA"/>
    <property type="match status" value="1"/>
</dbReference>
<dbReference type="PIRSF" id="PIRSF500207">
    <property type="entry name" value="MtrA"/>
    <property type="match status" value="1"/>
</dbReference>
<dbReference type="PIRSF" id="PIRSF009452">
    <property type="entry name" value="MtrA_MtxA"/>
    <property type="match status" value="1"/>
</dbReference>
<protein>
    <recommendedName>
        <fullName evidence="1">Tetrahydromethanopterin S-methyltransferase subunit A 1</fullName>
        <ecNumber evidence="1 4">7.2.1.4</ecNumber>
    </recommendedName>
    <alternativeName>
        <fullName evidence="1">N5-methyltetrahydromethanopterin--coenzyme M methyltransferase subunit A 1</fullName>
    </alternativeName>
</protein>
<keyword id="KW-0002">3D-structure</keyword>
<keyword id="KW-1003">Cell membrane</keyword>
<keyword id="KW-0170">Cobalt</keyword>
<keyword id="KW-0903">Direct protein sequencing</keyword>
<keyword id="KW-0472">Membrane</keyword>
<keyword id="KW-0484">Methanogenesis</keyword>
<keyword id="KW-0489">Methyltransferase</keyword>
<keyword id="KW-0554">One-carbon metabolism</keyword>
<keyword id="KW-0808">Transferase</keyword>
<keyword id="KW-1278">Translocase</keyword>
<keyword id="KW-0812">Transmembrane</keyword>
<keyword id="KW-1133">Transmembrane helix</keyword>
<organism>
    <name type="scientific">Methanothermobacter marburgensis (strain ATCC BAA-927 / DSM 2133 / JCM 14651 / NBRC 100331 / OCM 82 / Marburg)</name>
    <name type="common">Methanobacterium thermoautotrophicum</name>
    <dbReference type="NCBI Taxonomy" id="79929"/>
    <lineage>
        <taxon>Archaea</taxon>
        <taxon>Methanobacteriati</taxon>
        <taxon>Methanobacteriota</taxon>
        <taxon>Methanomada group</taxon>
        <taxon>Methanobacteria</taxon>
        <taxon>Methanobacteriales</taxon>
        <taxon>Methanobacteriaceae</taxon>
        <taxon>Methanothermobacter</taxon>
    </lineage>
</organism>
<comment type="function">
    <text evidence="1 4">Part of a complex that catalyzes the formation of methyl-coenzyme M and tetrahydromethanopterin from coenzyme M and methyl-tetrahydromethanopterin. This is an energy-conserving, sodium-ion translocating step.</text>
</comment>
<comment type="catalytic activity">
    <reaction evidence="1 4">
        <text>5-methyl-5,6,7,8-tetrahydromethanopterin + coenzyme M + 2 Na(+)(in) = 5,6,7,8-tetrahydromethanopterin + methyl-coenzyme M + 2 Na(+)(out)</text>
        <dbReference type="Rhea" id="RHEA:53492"/>
        <dbReference type="ChEBI" id="CHEBI:29101"/>
        <dbReference type="ChEBI" id="CHEBI:58103"/>
        <dbReference type="ChEBI" id="CHEBI:58116"/>
        <dbReference type="ChEBI" id="CHEBI:58286"/>
        <dbReference type="ChEBI" id="CHEBI:58319"/>
        <dbReference type="EC" id="7.2.1.4"/>
    </reaction>
</comment>
<comment type="cofactor">
    <cofactor evidence="4">
        <name>5-hydroxybenzimidazolylcob(I)amide</name>
        <dbReference type="ChEBI" id="CHEBI:60494"/>
    </cofactor>
    <text>Binds 1 5-hydroxybenzimidazolylcobamide group.</text>
</comment>
<comment type="biophysicochemical properties">
    <kinetics>
        <KM evidence="4">260 uM for 5-methyl-5,6,7,8-tetrahydromethanopterin</KM>
        <KM evidence="4">60 uM for coenzyme M</KM>
        <Vmax evidence="4">11.6 umol/min/mg enzyme</Vmax>
        <text evidence="4">From other experiments a much lower Km for 5-methyl-5,6,7,8-tetrahydromethanopterin is estimated.</text>
    </kinetics>
</comment>
<comment type="pathway">
    <text evidence="1">One-carbon metabolism; methanogenesis from CO(2); methyl-coenzyme M from 5,10-methylene-5,6,7,8-tetrahydromethanopterin: step 2/2.</text>
</comment>
<comment type="subunit">
    <text evidence="1 2">The complex is composed of 8 subunits; MtrA, MtrB, MtrC, MtrD, MtrE, MtrF, MtrG and MtrH.</text>
</comment>
<comment type="subcellular location">
    <subcellularLocation>
        <location evidence="1 3">Cell membrane</location>
        <topology evidence="1 3">Single-pass membrane protein</topology>
    </subcellularLocation>
</comment>
<comment type="induction">
    <text evidence="8">Part of the probable mtrEDCBAFGH operon.</text>
</comment>
<comment type="similarity">
    <text evidence="1">Belongs to the MtrA family.</text>
</comment>
<name>MTRA1_METTM</name>
<gene>
    <name evidence="1" type="primary">mtrA1</name>
    <name evidence="6" type="synonym">mtrA</name>
    <name type="ordered locus">MTBMA_c15430</name>
</gene>
<reference key="1">
    <citation type="journal article" date="1993" name="Eur. J. Biochem.">
        <title>Cloning, sequencing and immunological characterization of the corrinoid-containing subunit of the N5-methyltetrahydromethanopterin: coenzyme-M methyltransferase from Methanobacterium thermoautotrophicum.</title>
        <authorList>
            <person name="Stupperich E."/>
            <person name="Juza A."/>
            <person name="Hoppert M."/>
            <person name="Mayer F."/>
        </authorList>
    </citation>
    <scope>NUCLEOTIDE SEQUENCE [GENOMIC DNA]</scope>
    <scope>SUBCELLULAR LOCATION</scope>
    <source>
        <strain>ATCC BAA-927 / DSM 2133 / JCM 14651 / NBRC 100331 / OCM 82 / Marburg</strain>
    </source>
</reference>
<reference key="2">
    <citation type="journal article" date="2010" name="J. Bacteriol.">
        <title>Complete genome sequence of Methanothermobacter marburgensis, a methanoarchaeon model organism.</title>
        <authorList>
            <person name="Liesegang H."/>
            <person name="Kaster A.K."/>
            <person name="Wiezer A."/>
            <person name="Goenrich M."/>
            <person name="Wollherr A."/>
            <person name="Seedorf H."/>
            <person name="Gottschalk G."/>
            <person name="Thauer R.K."/>
        </authorList>
    </citation>
    <scope>NUCLEOTIDE SEQUENCE [LARGE SCALE GENOMIC DNA]</scope>
    <source>
        <strain>ATCC BAA-927 / DSM 2133 / JCM 14651 / NBRC 100331 / OCM 82 / Marburg</strain>
    </source>
</reference>
<reference key="3">
    <citation type="journal article" date="1993" name="Eur. J. Biochem.">
        <title>Purification and properties of N5-methyltetrahydromethanopterin:coenzyme M methyltransferase from Methanobacterium thermoautotrophicum.</title>
        <authorList>
            <person name="Gaertner P."/>
            <person name="Ecker A."/>
            <person name="Fischer R."/>
            <person name="Linder D."/>
            <person name="Fuchs G."/>
            <person name="Thauer R.K."/>
        </authorList>
    </citation>
    <scope>PROTEIN SEQUENCE OF 2-24</scope>
    <scope>FUNCTION</scope>
    <scope>CATALYTIC ACTIVITY</scope>
    <scope>COFACTOR</scope>
    <scope>BIOPHYSICOCHEMICAL PROPERTIES</scope>
    <source>
        <strain>ATCC BAA-927 / DSM 2133 / JCM 14651 / NBRC 100331 / OCM 82 / Marburg</strain>
    </source>
</reference>
<reference key="4">
    <citation type="journal article" date="1995" name="Eur. J. Biochem.">
        <title>The energy conserving N5-methyltetrahydromethanopterin:coenzyme M methyltransferase complex from Methanobacterium thermoautotrophicum is composed of eight different subunits.</title>
        <authorList>
            <person name="Harms U."/>
            <person name="Weiss D.S."/>
            <person name="Gaertner P."/>
            <person name="Linder D."/>
            <person name="Thauer R.K."/>
        </authorList>
    </citation>
    <scope>SUBUNIT</scope>
    <scope>OPERON STRUCTURE</scope>
    <source>
        <strain>ATCC BAA-927 / DSM 2133 / JCM 14651 / NBRC 100331 / OCM 82 / Marburg</strain>
    </source>
</reference>
<reference key="5">
    <citation type="journal article" date="1997" name="Eur. J. Biochem.">
        <title>Identification of the active site histidine in the corrinoid protein MtrA of the energy-conserving methyltransferase complex from Methanobacterium thermoautotrophicum.</title>
        <authorList>
            <person name="Harms U."/>
            <person name="Thauer R.K."/>
        </authorList>
    </citation>
    <scope>BINDING SITE HIS-84</scope>
    <scope>MUTAGENESIS OF HIS-35; HIS-84 AND HIS-94</scope>
    <source>
        <strain>ATCC BAA-927 / DSM 2133 / JCM 14651 / NBRC 100331 / OCM 82 / Marburg</strain>
    </source>
</reference>
<sequence length="238" mass="25617">MVEKKSPAEGWPVVNGDYIVGDPESPVAATTLASHIEDIPVEAGAAIAGPCKTENLGIEKMIANLISNPNIRFLILCGSEVQGHITGQSIEALHQNGVDPDKRNIIGATGAIPYIENIPDEGIERFQKQLEIVNLIDVEDADAIKAKVKECIEKDPGAFEEEAMIIKVEEGGEEEEGEEVKPVAPETALIEARMRNIQTQVKMIGSTNRMFAGMYSGKVQGIMIGLAFTLTLGILLLV</sequence>
<feature type="initiator methionine" description="Removed" evidence="4">
    <location>
        <position position="1"/>
    </location>
</feature>
<feature type="chain" id="PRO_0000147508" description="Tetrahydromethanopterin S-methyltransferase subunit A 1">
    <location>
        <begin position="2"/>
        <end position="238"/>
    </location>
</feature>
<feature type="topological domain" description="Cytoplasmic" evidence="1">
    <location>
        <begin position="2"/>
        <end position="218"/>
    </location>
</feature>
<feature type="transmembrane region" description="Helical" evidence="1">
    <location>
        <begin position="219"/>
        <end position="237"/>
    </location>
</feature>
<feature type="topological domain" description="Extracellular" evidence="1">
    <location>
        <position position="238"/>
    </location>
</feature>
<feature type="binding site" evidence="7">
    <location>
        <position position="84"/>
    </location>
    <ligand>
        <name>5-hydroxybenzimidazolylcob(I)amide</name>
        <dbReference type="ChEBI" id="CHEBI:60494"/>
        <note>cofactor</note>
    </ligand>
</feature>
<feature type="mutagenesis site" description="No change in cofactor binding. No change in cofactor binding; when associated with K-94." evidence="5">
    <original>H</original>
    <variation>K</variation>
    <location>
        <position position="35"/>
    </location>
</feature>
<feature type="mutagenesis site" description="Abolishes cofactor binding." evidence="5">
    <original>H</original>
    <variation>G</variation>
    <variation>N</variation>
    <variation>S</variation>
    <location>
        <position position="84"/>
    </location>
</feature>
<feature type="mutagenesis site" description="No change in cofactor binding; when associated with K-35." evidence="5">
    <original>H</original>
    <variation>K</variation>
    <location>
        <position position="94"/>
    </location>
</feature>